<keyword id="KW-0408">Iron</keyword>
<keyword id="KW-0479">Metal-binding</keyword>
<reference key="1">
    <citation type="journal article" date="2009" name="PLoS Genet.">
        <title>Organised genome dynamics in the Escherichia coli species results in highly diverse adaptive paths.</title>
        <authorList>
            <person name="Touchon M."/>
            <person name="Hoede C."/>
            <person name="Tenaillon O."/>
            <person name="Barbe V."/>
            <person name="Baeriswyl S."/>
            <person name="Bidet P."/>
            <person name="Bingen E."/>
            <person name="Bonacorsi S."/>
            <person name="Bouchier C."/>
            <person name="Bouvet O."/>
            <person name="Calteau A."/>
            <person name="Chiapello H."/>
            <person name="Clermont O."/>
            <person name="Cruveiller S."/>
            <person name="Danchin A."/>
            <person name="Diard M."/>
            <person name="Dossat C."/>
            <person name="Karoui M.E."/>
            <person name="Frapy E."/>
            <person name="Garry L."/>
            <person name="Ghigo J.M."/>
            <person name="Gilles A.M."/>
            <person name="Johnson J."/>
            <person name="Le Bouguenec C."/>
            <person name="Lescat M."/>
            <person name="Mangenot S."/>
            <person name="Martinez-Jehanne V."/>
            <person name="Matic I."/>
            <person name="Nassif X."/>
            <person name="Oztas S."/>
            <person name="Petit M.A."/>
            <person name="Pichon C."/>
            <person name="Rouy Z."/>
            <person name="Ruf C.S."/>
            <person name="Schneider D."/>
            <person name="Tourret J."/>
            <person name="Vacherie B."/>
            <person name="Vallenet D."/>
            <person name="Medigue C."/>
            <person name="Rocha E.P.C."/>
            <person name="Denamur E."/>
        </authorList>
    </citation>
    <scope>NUCLEOTIDE SEQUENCE [LARGE SCALE GENOMIC DNA]</scope>
    <source>
        <strain>ATCC 35469 / DSM 13698 / BCRC 15582 / CCUG 18766 / IAM 14443 / JCM 21226 / LMG 7866 / NBRC 102419 / NCTC 12128 / CDC 0568-73</strain>
    </source>
</reference>
<feature type="chain" id="PRO_1000190058" description="Iron-sulfur cluster assembly protein CyaY">
    <location>
        <begin position="1"/>
        <end position="106"/>
    </location>
</feature>
<dbReference type="EMBL" id="CU928158">
    <property type="protein sequence ID" value="CAQ91159.1"/>
    <property type="molecule type" value="Genomic_DNA"/>
</dbReference>
<dbReference type="RefSeq" id="WP_000999963.1">
    <property type="nucleotide sequence ID" value="NC_011740.1"/>
</dbReference>
<dbReference type="SMR" id="B7LU51"/>
<dbReference type="GeneID" id="75059701"/>
<dbReference type="KEGG" id="efe:EFER_3697"/>
<dbReference type="HOGENOM" id="CLU_080880_3_0_6"/>
<dbReference type="OrthoDB" id="285675at2"/>
<dbReference type="Proteomes" id="UP000000745">
    <property type="component" value="Chromosome"/>
</dbReference>
<dbReference type="GO" id="GO:0005829">
    <property type="term" value="C:cytosol"/>
    <property type="evidence" value="ECO:0007669"/>
    <property type="project" value="TreeGrafter"/>
</dbReference>
<dbReference type="GO" id="GO:0008199">
    <property type="term" value="F:ferric iron binding"/>
    <property type="evidence" value="ECO:0007669"/>
    <property type="project" value="InterPro"/>
</dbReference>
<dbReference type="GO" id="GO:0008198">
    <property type="term" value="F:ferrous iron binding"/>
    <property type="evidence" value="ECO:0007669"/>
    <property type="project" value="TreeGrafter"/>
</dbReference>
<dbReference type="GO" id="GO:0016226">
    <property type="term" value="P:iron-sulfur cluster assembly"/>
    <property type="evidence" value="ECO:0007669"/>
    <property type="project" value="UniProtKB-UniRule"/>
</dbReference>
<dbReference type="CDD" id="cd00503">
    <property type="entry name" value="Frataxin"/>
    <property type="match status" value="1"/>
</dbReference>
<dbReference type="FunFam" id="3.30.920.10:FF:000001">
    <property type="entry name" value="Iron-sulfur cluster assembly protein CyaY"/>
    <property type="match status" value="1"/>
</dbReference>
<dbReference type="Gene3D" id="3.30.920.10">
    <property type="entry name" value="Frataxin/CyaY"/>
    <property type="match status" value="1"/>
</dbReference>
<dbReference type="HAMAP" id="MF_00142">
    <property type="entry name" value="CyaY"/>
    <property type="match status" value="1"/>
</dbReference>
<dbReference type="InterPro" id="IPR047584">
    <property type="entry name" value="CyaY"/>
</dbReference>
<dbReference type="InterPro" id="IPR002908">
    <property type="entry name" value="Frataxin/CyaY"/>
</dbReference>
<dbReference type="InterPro" id="IPR036524">
    <property type="entry name" value="Frataxin/CyaY_sf"/>
</dbReference>
<dbReference type="InterPro" id="IPR020895">
    <property type="entry name" value="Frataxin_CS"/>
</dbReference>
<dbReference type="NCBIfam" id="TIGR03421">
    <property type="entry name" value="FeS_CyaY"/>
    <property type="match status" value="1"/>
</dbReference>
<dbReference type="PANTHER" id="PTHR16821">
    <property type="entry name" value="FRATAXIN"/>
    <property type="match status" value="1"/>
</dbReference>
<dbReference type="PANTHER" id="PTHR16821:SF2">
    <property type="entry name" value="FRATAXIN, MITOCHONDRIAL"/>
    <property type="match status" value="1"/>
</dbReference>
<dbReference type="Pfam" id="PF01491">
    <property type="entry name" value="Frataxin_Cyay"/>
    <property type="match status" value="1"/>
</dbReference>
<dbReference type="SMART" id="SM01219">
    <property type="entry name" value="Frataxin_Cyay"/>
    <property type="match status" value="1"/>
</dbReference>
<dbReference type="SUPFAM" id="SSF55387">
    <property type="entry name" value="Frataxin/Nqo15-like"/>
    <property type="match status" value="1"/>
</dbReference>
<dbReference type="PROSITE" id="PS01344">
    <property type="entry name" value="FRATAXIN_1"/>
    <property type="match status" value="1"/>
</dbReference>
<dbReference type="PROSITE" id="PS50810">
    <property type="entry name" value="FRATAXIN_2"/>
    <property type="match status" value="1"/>
</dbReference>
<gene>
    <name evidence="1" type="primary">cyaY</name>
    <name type="ordered locus">EFER_3697</name>
</gene>
<organism>
    <name type="scientific">Escherichia fergusonii (strain ATCC 35469 / DSM 13698 / CCUG 18766 / IAM 14443 / JCM 21226 / LMG 7866 / NBRC 102419 / NCTC 12128 / CDC 0568-73)</name>
    <dbReference type="NCBI Taxonomy" id="585054"/>
    <lineage>
        <taxon>Bacteria</taxon>
        <taxon>Pseudomonadati</taxon>
        <taxon>Pseudomonadota</taxon>
        <taxon>Gammaproteobacteria</taxon>
        <taxon>Enterobacterales</taxon>
        <taxon>Enterobacteriaceae</taxon>
        <taxon>Escherichia</taxon>
    </lineage>
</organism>
<sequence>MNDSEFHRLADTLWLTIEERLDDWDGDSDIDCEINGGVLTITFENGSKIIINRQEPLHQVWLATKQGGYHFDLKGDEWICDRSGETFWDLLEQAATQQAGETVSFR</sequence>
<name>CYAY_ESCF3</name>
<proteinExistence type="inferred from homology"/>
<comment type="function">
    <text evidence="1">Involved in iron-sulfur (Fe-S) cluster assembly. May act as a regulator of Fe-S biogenesis.</text>
</comment>
<comment type="similarity">
    <text evidence="1">Belongs to the frataxin family.</text>
</comment>
<accession>B7LU51</accession>
<evidence type="ECO:0000255" key="1">
    <source>
        <dbReference type="HAMAP-Rule" id="MF_00142"/>
    </source>
</evidence>
<protein>
    <recommendedName>
        <fullName evidence="1">Iron-sulfur cluster assembly protein CyaY</fullName>
    </recommendedName>
</protein>